<keyword id="KW-0028">Amino-acid biosynthesis</keyword>
<keyword id="KW-0057">Aromatic amino acid biosynthesis</keyword>
<keyword id="KW-0456">Lyase</keyword>
<keyword id="KW-0663">Pyridoxal phosphate</keyword>
<keyword id="KW-1185">Reference proteome</keyword>
<keyword id="KW-0822">Tryptophan biosynthesis</keyword>
<sequence>MKGRFGRFGGQYVPETVMNALIELEREFEEAKKDEKFMEEYRYYLKEYSGRPTPLYYAENLTKRLGGAKIYLKREDLNHTGAHKINNVLGQVLLAKRMGKKRIIAETGAGQHGVATATAAAMFGMECEIFMGEEDIKRQALNVFRMKLLGAKVTAVTSGTRTLKDAVNEAIRDWVTNIETTFYVIGSVVGPHPYPTMVRDFQRVIGDETKEQILEKEGRLPDYVVACVGGGSNAMGIFYPFIEDKGVKLVGVEAAGEGIETGKHASAMAKGSVGVLHGMMTYLLQDEEGKILPVHSISAGLDYPGVGPEHAYLKEIGRAEYVYATDEEALAAFMDLSRTEGIIPALESAHALAYAMKLAKKLDEDKIIVVNLSGRGDKDVNTVAKVMGVEL</sequence>
<proteinExistence type="inferred from homology"/>
<accession>Q8R9M9</accession>
<evidence type="ECO:0000255" key="1">
    <source>
        <dbReference type="HAMAP-Rule" id="MF_00133"/>
    </source>
</evidence>
<dbReference type="EC" id="4.2.1.20" evidence="1"/>
<dbReference type="EMBL" id="AE008691">
    <property type="protein sequence ID" value="AAM24782.1"/>
    <property type="molecule type" value="Genomic_DNA"/>
</dbReference>
<dbReference type="RefSeq" id="WP_011025815.1">
    <property type="nucleotide sequence ID" value="NC_003869.1"/>
</dbReference>
<dbReference type="SMR" id="Q8R9M9"/>
<dbReference type="STRING" id="273068.TTE1578"/>
<dbReference type="KEGG" id="tte:TTE1578"/>
<dbReference type="eggNOG" id="COG0133">
    <property type="taxonomic scope" value="Bacteria"/>
</dbReference>
<dbReference type="HOGENOM" id="CLU_016734_3_1_9"/>
<dbReference type="OrthoDB" id="9766131at2"/>
<dbReference type="UniPathway" id="UPA00035">
    <property type="reaction ID" value="UER00044"/>
</dbReference>
<dbReference type="Proteomes" id="UP000000555">
    <property type="component" value="Chromosome"/>
</dbReference>
<dbReference type="GO" id="GO:0005737">
    <property type="term" value="C:cytoplasm"/>
    <property type="evidence" value="ECO:0007669"/>
    <property type="project" value="TreeGrafter"/>
</dbReference>
<dbReference type="GO" id="GO:0004834">
    <property type="term" value="F:tryptophan synthase activity"/>
    <property type="evidence" value="ECO:0007669"/>
    <property type="project" value="UniProtKB-UniRule"/>
</dbReference>
<dbReference type="CDD" id="cd06446">
    <property type="entry name" value="Trp-synth_B"/>
    <property type="match status" value="1"/>
</dbReference>
<dbReference type="FunFam" id="3.40.50.1100:FF:000001">
    <property type="entry name" value="Tryptophan synthase beta chain"/>
    <property type="match status" value="1"/>
</dbReference>
<dbReference type="FunFam" id="3.40.50.1100:FF:000004">
    <property type="entry name" value="Tryptophan synthase beta chain"/>
    <property type="match status" value="1"/>
</dbReference>
<dbReference type="Gene3D" id="3.40.50.1100">
    <property type="match status" value="2"/>
</dbReference>
<dbReference type="HAMAP" id="MF_00133">
    <property type="entry name" value="Trp_synth_beta"/>
    <property type="match status" value="1"/>
</dbReference>
<dbReference type="InterPro" id="IPR006653">
    <property type="entry name" value="Trp_synth_b_CS"/>
</dbReference>
<dbReference type="InterPro" id="IPR006654">
    <property type="entry name" value="Trp_synth_beta"/>
</dbReference>
<dbReference type="InterPro" id="IPR023026">
    <property type="entry name" value="Trp_synth_beta/beta-like"/>
</dbReference>
<dbReference type="InterPro" id="IPR001926">
    <property type="entry name" value="TrpB-like_PALP"/>
</dbReference>
<dbReference type="InterPro" id="IPR036052">
    <property type="entry name" value="TrpB-like_PALP_sf"/>
</dbReference>
<dbReference type="NCBIfam" id="TIGR00263">
    <property type="entry name" value="trpB"/>
    <property type="match status" value="1"/>
</dbReference>
<dbReference type="PANTHER" id="PTHR48077:SF3">
    <property type="entry name" value="TRYPTOPHAN SYNTHASE"/>
    <property type="match status" value="1"/>
</dbReference>
<dbReference type="PANTHER" id="PTHR48077">
    <property type="entry name" value="TRYPTOPHAN SYNTHASE-RELATED"/>
    <property type="match status" value="1"/>
</dbReference>
<dbReference type="Pfam" id="PF00291">
    <property type="entry name" value="PALP"/>
    <property type="match status" value="1"/>
</dbReference>
<dbReference type="PIRSF" id="PIRSF001413">
    <property type="entry name" value="Trp_syn_beta"/>
    <property type="match status" value="1"/>
</dbReference>
<dbReference type="SUPFAM" id="SSF53686">
    <property type="entry name" value="Tryptophan synthase beta subunit-like PLP-dependent enzymes"/>
    <property type="match status" value="1"/>
</dbReference>
<dbReference type="PROSITE" id="PS00168">
    <property type="entry name" value="TRP_SYNTHASE_BETA"/>
    <property type="match status" value="1"/>
</dbReference>
<gene>
    <name evidence="1" type="primary">trpB</name>
    <name type="ordered locus">TTE1578</name>
</gene>
<feature type="chain" id="PRO_0000099016" description="Tryptophan synthase beta chain">
    <location>
        <begin position="1"/>
        <end position="391"/>
    </location>
</feature>
<feature type="modified residue" description="N6-(pyridoxal phosphate)lysine" evidence="1">
    <location>
        <position position="84"/>
    </location>
</feature>
<organism>
    <name type="scientific">Caldanaerobacter subterraneus subsp. tengcongensis (strain DSM 15242 / JCM 11007 / NBRC 100824 / MB4)</name>
    <name type="common">Thermoanaerobacter tengcongensis</name>
    <dbReference type="NCBI Taxonomy" id="273068"/>
    <lineage>
        <taxon>Bacteria</taxon>
        <taxon>Bacillati</taxon>
        <taxon>Bacillota</taxon>
        <taxon>Clostridia</taxon>
        <taxon>Thermoanaerobacterales</taxon>
        <taxon>Thermoanaerobacteraceae</taxon>
        <taxon>Caldanaerobacter</taxon>
    </lineage>
</organism>
<name>TRPB_CALS4</name>
<protein>
    <recommendedName>
        <fullName evidence="1">Tryptophan synthase beta chain</fullName>
        <ecNumber evidence="1">4.2.1.20</ecNumber>
    </recommendedName>
</protein>
<comment type="function">
    <text evidence="1">The beta subunit is responsible for the synthesis of L-tryptophan from indole and L-serine.</text>
</comment>
<comment type="catalytic activity">
    <reaction evidence="1">
        <text>(1S,2R)-1-C-(indol-3-yl)glycerol 3-phosphate + L-serine = D-glyceraldehyde 3-phosphate + L-tryptophan + H2O</text>
        <dbReference type="Rhea" id="RHEA:10532"/>
        <dbReference type="ChEBI" id="CHEBI:15377"/>
        <dbReference type="ChEBI" id="CHEBI:33384"/>
        <dbReference type="ChEBI" id="CHEBI:57912"/>
        <dbReference type="ChEBI" id="CHEBI:58866"/>
        <dbReference type="ChEBI" id="CHEBI:59776"/>
        <dbReference type="EC" id="4.2.1.20"/>
    </reaction>
</comment>
<comment type="cofactor">
    <cofactor evidence="1">
        <name>pyridoxal 5'-phosphate</name>
        <dbReference type="ChEBI" id="CHEBI:597326"/>
    </cofactor>
</comment>
<comment type="pathway">
    <text evidence="1">Amino-acid biosynthesis; L-tryptophan biosynthesis; L-tryptophan from chorismate: step 5/5.</text>
</comment>
<comment type="subunit">
    <text evidence="1">Tetramer of two alpha and two beta chains.</text>
</comment>
<comment type="similarity">
    <text evidence="1">Belongs to the TrpB family.</text>
</comment>
<reference key="1">
    <citation type="journal article" date="2002" name="Genome Res.">
        <title>A complete sequence of the T. tengcongensis genome.</title>
        <authorList>
            <person name="Bao Q."/>
            <person name="Tian Y."/>
            <person name="Li W."/>
            <person name="Xu Z."/>
            <person name="Xuan Z."/>
            <person name="Hu S."/>
            <person name="Dong W."/>
            <person name="Yang J."/>
            <person name="Chen Y."/>
            <person name="Xue Y."/>
            <person name="Xu Y."/>
            <person name="Lai X."/>
            <person name="Huang L."/>
            <person name="Dong X."/>
            <person name="Ma Y."/>
            <person name="Ling L."/>
            <person name="Tan H."/>
            <person name="Chen R."/>
            <person name="Wang J."/>
            <person name="Yu J."/>
            <person name="Yang H."/>
        </authorList>
    </citation>
    <scope>NUCLEOTIDE SEQUENCE [LARGE SCALE GENOMIC DNA]</scope>
    <source>
        <strain>DSM 15242 / JCM 11007 / NBRC 100824 / MB4</strain>
    </source>
</reference>